<feature type="chain" id="PRO_0000454076" description="Eukaryotic translation initiation factor isoform 4E">
    <location>
        <begin position="1"/>
        <end position="200"/>
    </location>
</feature>
<feature type="binding site" evidence="3">
    <location>
        <begin position="44"/>
        <end position="49"/>
    </location>
    <ligand>
        <name>mRNA</name>
        <dbReference type="ChEBI" id="CHEBI:33699"/>
    </ligand>
    <ligandPart>
        <name>N(7)-methylguanosine 5'-triphosphate group</name>
        <dbReference type="ChEBI" id="CHEBI:74429"/>
        <note>m7GTP residue in mRNA cap</note>
    </ligandPart>
</feature>
<feature type="binding site" evidence="3">
    <location>
        <position position="76"/>
    </location>
    <ligand>
        <name>mRNA</name>
        <dbReference type="ChEBI" id="CHEBI:33699"/>
    </ligand>
    <ligandPart>
        <name>N(7)-methylguanosine 5'-triphosphate group</name>
        <dbReference type="ChEBI" id="CHEBI:74429"/>
        <note>m7GTP residue in mRNA cap</note>
    </ligandPart>
</feature>
<feature type="binding site" evidence="3">
    <location>
        <begin position="94"/>
        <end position="95"/>
    </location>
    <ligand>
        <name>mRNA</name>
        <dbReference type="ChEBI" id="CHEBI:33699"/>
    </ligand>
    <ligandPart>
        <name>N(7)-methylguanosine 5'-triphosphate group</name>
        <dbReference type="ChEBI" id="CHEBI:74429"/>
        <note>m7GTP residue in mRNA cap</note>
    </ligandPart>
</feature>
<feature type="binding site" evidence="3">
    <location>
        <begin position="145"/>
        <end position="150"/>
    </location>
    <ligand>
        <name>mRNA</name>
        <dbReference type="ChEBI" id="CHEBI:33699"/>
    </ligand>
    <ligandPart>
        <name>N(7)-methylguanosine 5'-triphosphate group</name>
        <dbReference type="ChEBI" id="CHEBI:74429"/>
        <note>m7GTP residue in mRNA cap</note>
    </ligandPart>
</feature>
<feature type="binding site" evidence="4">
    <location>
        <begin position="189"/>
        <end position="192"/>
    </location>
    <ligand>
        <name>mRNA</name>
        <dbReference type="ChEBI" id="CHEBI:33699"/>
    </ligand>
    <ligandPart>
        <name>N(7)-methylguanosine 5'-triphosphate group</name>
        <dbReference type="ChEBI" id="CHEBI:74429"/>
        <note>m7GTP residue in mRNA cap</note>
    </ligandPart>
</feature>
<feature type="disulfide bond" evidence="3">
    <location>
        <begin position="99"/>
        <end position="138"/>
    </location>
</feature>
<feature type="sequence variant" description="In strain: cv. Zhongshu 5." evidence="6">
    <original>K</original>
    <variation>R</variation>
    <location>
        <position position="87"/>
    </location>
</feature>
<comment type="function">
    <text evidence="2 3 6">Component of the protein complex eIF4F, which is involved in the recognition of the mRNA cap, ATP-dependent unwinding of 5'-terminal secondary structure and recruitment of mRNA to the ribosome (By similarity). Recognizes and binds the 7-methylguanosine-containing mRNA cap during an early step in the initiation of protein synthesis and facilitates ribosome binding by inducing the unwinding of the mRNAs secondary structures (By similarity). Key component of recessive resistance to potyviruses (Ref.1).</text>
</comment>
<comment type="function">
    <text evidence="6">(Microbial infection) Susceptibility host factor required for viral infection by recruiting viral RNAs to the host ribosomal complex via an interaction with viral genome-linked protein (VPg).</text>
</comment>
<comment type="subunit">
    <text evidence="2">EIF4F is a multi-subunit complex, the composition of which varies with external and internal environmental conditions. It is composed of at least EIF4A, EIF4E and EIF4G. EIF4E is also known to interact with other partners. In higher plants two isoforms of EIF4F have been identified, named isoform EIF4F and isoform EIF(iso)4F. Isoform EIF4F has subunits p220 and p26, whereas isoform EIF(iso)4F has subunits p82 and p28.</text>
</comment>
<comment type="subunit">
    <text evidence="10">(Microbial infection) Interacts with viral genome-linked protein (VPg); this interaction is possible in susceptible hosts but impaired in resistant plants.</text>
</comment>
<comment type="subcellular location">
    <subcellularLocation>
        <location evidence="1">Cytoplasm</location>
    </subcellularLocation>
    <subcellularLocation>
        <location evidence="1">Nucleus</location>
    </subcellularLocation>
</comment>
<comment type="tissue specificity">
    <text evidence="6">Mostly expressed in roots and leaves, and, to a lower extent, in stems, flowers and immature green fruits.</text>
</comment>
<comment type="PTM">
    <text evidence="3">According to the redox status, the Cys-99-Cys-138 disulfide bridge may have a role in regulating protein function by affecting its ability to bind capped mRNA.</text>
</comment>
<comment type="polymorphism">
    <text evidence="6">Variant present in strain cv. Zhongshu 5, confers an increased resistance to potyvirus cucumber mosaic virus (CMV) and tobacco mosaic virus (TMV) and tolerance to plum pox virus (PPV).</text>
</comment>
<comment type="disruption phenotype">
    <text evidence="5">No obvious growth defects (PubMed:22242134). Plants lacking eIFiso4E, eIF4E1 and eIF4E2 exhibit a semi-dwarf phenotype (PubMed:22242134).</text>
</comment>
<comment type="miscellaneous">
    <text evidence="10">Displayed sequence is from cv. Heinz 1706 and cv. Ailsa Craig, and is associated with susceptibility to cucumber mosaic virus (CMV), tobacco mosaic virus (TMV) and plum pox virus (PPV).</text>
</comment>
<comment type="similarity">
    <text evidence="9">Belongs to the eukaryotic initiation factor 4E family.</text>
</comment>
<accession>A0A3Q7I7R4</accession>
<accession>A7Y4C8</accession>
<accession>C9E258</accession>
<organism>
    <name type="scientific">Solanum lycopersicum</name>
    <name type="common">Tomato</name>
    <name type="synonym">Lycopersicon esculentum</name>
    <dbReference type="NCBI Taxonomy" id="4081"/>
    <lineage>
        <taxon>Eukaryota</taxon>
        <taxon>Viridiplantae</taxon>
        <taxon>Streptophyta</taxon>
        <taxon>Embryophyta</taxon>
        <taxon>Tracheophyta</taxon>
        <taxon>Spermatophyta</taxon>
        <taxon>Magnoliopsida</taxon>
        <taxon>eudicotyledons</taxon>
        <taxon>Gunneridae</taxon>
        <taxon>Pentapetalae</taxon>
        <taxon>asterids</taxon>
        <taxon>lamiids</taxon>
        <taxon>Solanales</taxon>
        <taxon>Solanaceae</taxon>
        <taxon>Solanoideae</taxon>
        <taxon>Solaneae</taxon>
        <taxon>Solanum</taxon>
        <taxon>Solanum subgen. Lycopersicon</taxon>
    </lineage>
</organism>
<sequence length="200" mass="22823">MATEAPVEATEIPSVAAAETVEKQPHKLERKWTFWFDNQSKPKQGVAWGSSLRKAYTFETVEEFWSLYDQIFKPSKVTVNADFHLFKAGIEPKWEDPECANGGKWTATSSRKANLETMWLETLMALVGEQFDESEDICGVVASVRRSQDKLSLWTKTATNEAAQMGIGRKWKEIIDAEKISYSFHDDSKRERSAKSRYTV</sequence>
<protein>
    <recommendedName>
        <fullName evidence="7 8">Eukaryotic translation initiation factor isoform 4E</fullName>
        <shortName evidence="7 8">SleIF(iso)4E</shortName>
        <shortName evidence="7 8">eIF(iso)-4E</shortName>
    </recommendedName>
    <alternativeName>
        <fullName evidence="9">eIF-(iso)4F 25 kDa subunit</fullName>
    </alternativeName>
    <alternativeName>
        <fullName evidence="9">eIF-(iso)4F p28 subunit</fullName>
    </alternativeName>
    <alternativeName>
        <fullName evidence="9">mRNA cap-binding protein</fullName>
    </alternativeName>
</protein>
<gene>
    <name evidence="7 8" type="primary">eIFiso4E</name>
</gene>
<name>IFI4E_SOLLC</name>
<keyword id="KW-0963">Cytoplasm</keyword>
<keyword id="KW-1015">Disulfide bond</keyword>
<keyword id="KW-0396">Initiation factor</keyword>
<keyword id="KW-0539">Nucleus</keyword>
<keyword id="KW-0648">Protein biosynthesis</keyword>
<keyword id="KW-1185">Reference proteome</keyword>
<keyword id="KW-0694">RNA-binding</keyword>
<keyword id="KW-0810">Translation regulation</keyword>
<dbReference type="EMBL" id="EU119958">
    <property type="protein sequence ID" value="ABV23495.1"/>
    <property type="molecule type" value="mRNA"/>
</dbReference>
<dbReference type="EMBL" id="GQ451832">
    <property type="protein sequence ID" value="ACV74553.1"/>
    <property type="molecule type" value="Genomic_DNA"/>
</dbReference>
<dbReference type="RefSeq" id="NP_001234772.2">
    <property type="nucleotide sequence ID" value="NM_001247843.2"/>
</dbReference>
<dbReference type="SMR" id="A0A3Q7I7R4"/>
<dbReference type="FunCoup" id="A0A3Q7I7R4">
    <property type="interactions" value="2762"/>
</dbReference>
<dbReference type="STRING" id="4081.A0A3Q7I7R4"/>
<dbReference type="PaxDb" id="4081-Solyc09g090580.2.1"/>
<dbReference type="EnsemblPlants" id="Solyc09g090580.3.1">
    <property type="protein sequence ID" value="Solyc09g090580.3.1"/>
    <property type="gene ID" value="Solyc09g090580.3"/>
</dbReference>
<dbReference type="GeneID" id="100134893"/>
<dbReference type="Gramene" id="Solyc09g090580.3.1">
    <property type="protein sequence ID" value="Solyc09g090580.3.1"/>
    <property type="gene ID" value="Solyc09g090580.3"/>
</dbReference>
<dbReference type="KEGG" id="sly:100134893"/>
<dbReference type="InParanoid" id="A0A3Q7I7R4"/>
<dbReference type="OMA" id="GNAWETE"/>
<dbReference type="OrthoDB" id="590761at2759"/>
<dbReference type="Proteomes" id="UP000004994">
    <property type="component" value="Chromosome 9"/>
</dbReference>
<dbReference type="GO" id="GO:0016281">
    <property type="term" value="C:eukaryotic translation initiation factor 4F complex"/>
    <property type="evidence" value="ECO:0000318"/>
    <property type="project" value="GO_Central"/>
</dbReference>
<dbReference type="GO" id="GO:0005634">
    <property type="term" value="C:nucleus"/>
    <property type="evidence" value="ECO:0007669"/>
    <property type="project" value="UniProtKB-SubCell"/>
</dbReference>
<dbReference type="GO" id="GO:0000340">
    <property type="term" value="F:RNA 7-methylguanosine cap binding"/>
    <property type="evidence" value="ECO:0000318"/>
    <property type="project" value="GO_Central"/>
</dbReference>
<dbReference type="GO" id="GO:0003743">
    <property type="term" value="F:translation initiation factor activity"/>
    <property type="evidence" value="ECO:0000318"/>
    <property type="project" value="GO_Central"/>
</dbReference>
<dbReference type="GO" id="GO:0050687">
    <property type="term" value="P:negative regulation of defense response to virus"/>
    <property type="evidence" value="ECO:0007669"/>
    <property type="project" value="EnsemblPlants"/>
</dbReference>
<dbReference type="GO" id="GO:0006417">
    <property type="term" value="P:regulation of translation"/>
    <property type="evidence" value="ECO:0007669"/>
    <property type="project" value="UniProtKB-KW"/>
</dbReference>
<dbReference type="GO" id="GO:0009615">
    <property type="term" value="P:response to virus"/>
    <property type="evidence" value="ECO:0007669"/>
    <property type="project" value="EnsemblPlants"/>
</dbReference>
<dbReference type="GO" id="GO:0006413">
    <property type="term" value="P:translational initiation"/>
    <property type="evidence" value="ECO:0000318"/>
    <property type="project" value="GO_Central"/>
</dbReference>
<dbReference type="FunFam" id="3.30.760.10:FF:000003">
    <property type="entry name" value="Eukaryotic translation initiation factor 4E"/>
    <property type="match status" value="1"/>
</dbReference>
<dbReference type="Gene3D" id="3.30.760.10">
    <property type="entry name" value="RNA Cap, Translation Initiation Factor Eif4e"/>
    <property type="match status" value="1"/>
</dbReference>
<dbReference type="InterPro" id="IPR023398">
    <property type="entry name" value="TIF_eIF4e-like"/>
</dbReference>
<dbReference type="InterPro" id="IPR001040">
    <property type="entry name" value="TIF_eIF_4E"/>
</dbReference>
<dbReference type="InterPro" id="IPR019770">
    <property type="entry name" value="TIF_eIF_4E_CS"/>
</dbReference>
<dbReference type="PANTHER" id="PTHR11960">
    <property type="entry name" value="EUKARYOTIC TRANSLATION INITIATION FACTOR 4E RELATED"/>
    <property type="match status" value="1"/>
</dbReference>
<dbReference type="PANTHER" id="PTHR11960:SF60">
    <property type="entry name" value="EUKARYOTIC TRANSLATION INITIATION FACTOR ISOFORM 4E-2"/>
    <property type="match status" value="1"/>
</dbReference>
<dbReference type="Pfam" id="PF01652">
    <property type="entry name" value="IF4E"/>
    <property type="match status" value="1"/>
</dbReference>
<dbReference type="SUPFAM" id="SSF55418">
    <property type="entry name" value="eIF4e-like"/>
    <property type="match status" value="1"/>
</dbReference>
<dbReference type="PROSITE" id="PS00813">
    <property type="entry name" value="IF4E"/>
    <property type="match status" value="1"/>
</dbReference>
<proteinExistence type="evidence at protein level"/>
<reference key="1">
    <citation type="journal article" date="2009" name="Plant Mol. Biol. Rep.">
        <title>Molecular Cloning and Characterization of a Gene Encoding Eukaryotic Initiation Factor iso4E in Tomato (Solanum lycopersicum).</title>
        <authorList>
            <person name="Zhang Y.-Y."/>
            <person name="Qi M.-F."/>
            <person name="Sun J."/>
            <person name="Zhang X.-H."/>
            <person name="Shi H.-L."/>
            <person name="Li H.-X."/>
            <person name="Ye Z.-B."/>
        </authorList>
    </citation>
    <scope>NUCLEOTIDE SEQUENCE [MRNA]</scope>
    <scope>FUNCTION</scope>
    <scope>FUNCTION (MICROBIAL INFECTION)</scope>
    <scope>VARIANT ARG-87</scope>
    <scope>TISSUE SPECIFICITY</scope>
    <scope>SUBUNIT (MICROBIAL INFECTION)</scope>
    <scope>POLYMORPHISM</scope>
    <source>
        <strain>cv. Ailsa Craig</strain>
        <strain>cv. Zhongshu 5</strain>
    </source>
</reference>
<reference key="2">
    <citation type="journal article" date="2012" name="Nature">
        <title>The tomato genome sequence provides insights into fleshy fruit evolution.</title>
        <authorList>
            <consortium name="Tomato Genome Consortium"/>
        </authorList>
    </citation>
    <scope>NUCLEOTIDE SEQUENCE [LARGE SCALE GENOMIC DNA]</scope>
    <source>
        <strain>cv. Heinz 1706</strain>
    </source>
</reference>
<reference key="3">
    <citation type="journal article" date="2010" name="PLoS ONE">
        <title>An induced mutation in tomato eIF4E leads to immunity to two potyviruses.</title>
        <authorList>
            <person name="Piron F."/>
            <person name="Nicolai M."/>
            <person name="Minoia S."/>
            <person name="Piednoir E."/>
            <person name="Moretti A."/>
            <person name="Salgues A."/>
            <person name="Zamir D."/>
            <person name="Caranta C."/>
            <person name="Bendahmane A."/>
        </authorList>
    </citation>
    <scope>NUCLEOTIDE SEQUENCE [GENOMIC DNA] OF 1-164</scope>
    <source>
        <strain>cv. M82</strain>
    </source>
</reference>
<reference key="4">
    <citation type="journal article" date="2011" name="PLoS ONE">
        <title>Knock-down of both eIF4E1 and eIF4E2 genes confers broad-spectrum resistance against potyviruses in tomato.</title>
        <authorList>
            <person name="Mazier M."/>
            <person name="Flamain F."/>
            <person name="Nicolai M."/>
            <person name="Sarnette V."/>
            <person name="Caranta C."/>
        </authorList>
    </citation>
    <scope>DISRUPTION PHENOTYPE</scope>
    <source>
        <strain>cv. WVA106</strain>
    </source>
</reference>
<evidence type="ECO:0000250" key="1">
    <source>
        <dbReference type="UniProtKB" id="A0A445AGS0"/>
    </source>
</evidence>
<evidence type="ECO:0000250" key="2">
    <source>
        <dbReference type="UniProtKB" id="O04663"/>
    </source>
</evidence>
<evidence type="ECO:0000250" key="3">
    <source>
        <dbReference type="UniProtKB" id="P29557"/>
    </source>
</evidence>
<evidence type="ECO:0000250" key="4">
    <source>
        <dbReference type="UniProtKB" id="Q00LS8"/>
    </source>
</evidence>
<evidence type="ECO:0000269" key="5">
    <source>
    </source>
</evidence>
<evidence type="ECO:0000269" key="6">
    <source ref="1"/>
</evidence>
<evidence type="ECO:0000303" key="7">
    <source>
    </source>
</evidence>
<evidence type="ECO:0000303" key="8">
    <source ref="1"/>
</evidence>
<evidence type="ECO:0000305" key="9"/>
<evidence type="ECO:0000305" key="10">
    <source ref="1"/>
</evidence>